<comment type="function">
    <text evidence="2">Potent pro-inflammatory cytokine. Initially discovered as the major endogenous pyrogen, induces prostaglandin synthesis, neutrophil influx and activation, T-cell activation and cytokine production, B-cell activation and antibody production, and fibroblast proliferation and collagen production. Promotes Th17 differentiation of T-cells. Synergizes with IL12/interleukin-12 to induce IFNG synthesis from T-helper 1 (Th1) cells. Plays a role in angiogenesis by inducing VEGF production synergistically with TNF and IL6. Involved in transduction of inflammation downstream of pyroptosis: its mature form is specifically released in the extracellular milieu by passing through the gasdermin-D (GSDMD) pore.</text>
</comment>
<comment type="subunit">
    <text evidence="2">Monomer. In its precursor form, weakly interacts with full-length MEFV; the mature cytokine does not interact at all. Interacts with integrins ITGAV:ITGBV and ITGA5:ITGB1; integrin-binding is required for IL1B signaling. Interacts with cargo receptor TMED10; the interaction is direct and is required for the secretion of IL1B mature form. Interacts with HSP90AB1; the interaction facilitates cargo translocation into the ERGIC. Interacts with HSP90B1; the interaction facilitates cargo translocation into the ERGIC.</text>
</comment>
<comment type="subcellular location">
    <subcellularLocation>
        <location evidence="2">Cytoplasm</location>
        <location evidence="2">Cytosol</location>
    </subcellularLocation>
    <subcellularLocation>
        <location evidence="2">Secreted</location>
    </subcellularLocation>
    <subcellularLocation>
        <location evidence="2">Lysosome</location>
    </subcellularLocation>
    <subcellularLocation>
        <location evidence="3">Secreted</location>
        <location evidence="3">Extracellular exosome</location>
    </subcellularLocation>
    <text evidence="2">The precursor is cytosolic. In response to inflammasome-activating signals, such as ATP for NLRP3 inflammasome or bacterial flagellin for NLRC4 inflammasome, cleaved and secreted. Mature form is secreted and released in the extracellular milieu by passing through the gasdermin-D (GSDMD) pore. In contrast, the precursor form is not released, due to the presence of an acidic region that is proteolytically removed by CASP1 during maturation. The secretion is dependent on protein unfolding and facilitated by the cargo receptor TMED10.</text>
</comment>
<comment type="induction">
    <text evidence="4">In pancreatic islets, release is increased by high glucose treatment and, to a lesser extent, by endocannabinoid anandamide/AEA. The induction is more pronounced in Zucker diabetic fatty (ZDF) rats compared to lean animals.</text>
</comment>
<comment type="miscellaneous">
    <text evidence="1">IL1B production occurs in 2 steps, each being controlled by different stimuli. First, inflammatory signals, such as LPS, stimulate the synthesis and promote the accumulation of cytosolic stores of pro-IL1B (priming). Then additional signals are required for inflammasome assembly, leading to CASP1 activation, pro-IL1B processing and eventually secretion of the active cytokine. IL1B processing and secretion are temporarily associated.</text>
</comment>
<comment type="similarity">
    <text evidence="5">Belongs to the IL-1 family.</text>
</comment>
<sequence length="268" mass="30644">MATVPELNCEIAAFDSEENDLFFEADRPQKIKDCFQALDLGCPDESIQLQISQQHLDKSFRKAVSLIVAVEKLWQLPMSCPWSFQDEDPSTFFSFIFEEEPVLCDSWDDDDLLVCDVPIRQLHCRLRDEQQKCLVLSDPCELKALHLNGQNISQQVVFSMSFVQGETSNDKIPVALGLKGLNLYLSCVMKDGTPTLQLESVDPKQYPKKKMEKRFVFNKIEVKTKVEFESAQFPNWYISTSQAEHRPVFLGNSNGRDIVDFTMEPVSS</sequence>
<keyword id="KW-0202">Cytokine</keyword>
<keyword id="KW-0963">Cytoplasm</keyword>
<keyword id="KW-0395">Inflammatory response</keyword>
<keyword id="KW-0458">Lysosome</keyword>
<keyword id="KW-0497">Mitogen</keyword>
<keyword id="KW-0666">Pyrogen</keyword>
<keyword id="KW-1185">Reference proteome</keyword>
<keyword id="KW-0964">Secreted</keyword>
<protein>
    <recommendedName>
        <fullName>Interleukin-1 beta</fullName>
        <shortName>IL-1 beta</shortName>
    </recommendedName>
</protein>
<feature type="propeptide" id="PRO_0000015317" evidence="1">
    <location>
        <begin position="1"/>
        <end position="116"/>
    </location>
</feature>
<feature type="chain" id="PRO_0000015318" description="Interleukin-1 beta">
    <location>
        <begin position="117"/>
        <end position="268"/>
    </location>
</feature>
<feature type="site" description="Important for interaction with integrin" evidence="2">
    <location>
        <position position="171"/>
    </location>
</feature>
<feature type="site" description="Important for interaction with integrin" evidence="2">
    <location>
        <position position="179"/>
    </location>
</feature>
<feature type="site" description="Important for interaction with integrin" evidence="2">
    <location>
        <position position="190"/>
    </location>
</feature>
<feature type="site" description="Important for interaction with integrin" evidence="2">
    <location>
        <position position="204"/>
    </location>
</feature>
<reference key="1">
    <citation type="submission" date="1992-08" db="EMBL/GenBank/DDBJ databases">
        <authorList>
            <person name="Feeser W."/>
            <person name="Freimark B.D."/>
        </authorList>
    </citation>
    <scope>NUCLEOTIDE SEQUENCE [MRNA]</scope>
    <source>
        <strain>Sprague-Dawley</strain>
        <tissue>Macrophage</tissue>
    </source>
</reference>
<reference key="2">
    <citation type="journal article" date="2013" name="Nat. Med.">
        <title>Activation of the Nlrp3 inflammasome in infiltrating macrophages by endocannabinoids mediates beta cell loss in type 2 diabetes.</title>
        <authorList>
            <person name="Jourdan T."/>
            <person name="Godlewski G."/>
            <person name="Cinar R."/>
            <person name="Bertola A."/>
            <person name="Szanda G."/>
            <person name="Liu J."/>
            <person name="Tam J."/>
            <person name="Han T."/>
            <person name="Mukhopadhyay B."/>
            <person name="Skarulis M.C."/>
            <person name="Ju C."/>
            <person name="Aouadi M."/>
            <person name="Czech M.P."/>
            <person name="Kunos G."/>
        </authorList>
    </citation>
    <scope>INDUCTION BY ENDOCANNABINOID ANANDAMIDE AND HIGH GLUCOSE</scope>
</reference>
<dbReference type="EMBL" id="M98820">
    <property type="protein sequence ID" value="AAA41426.1"/>
    <property type="molecule type" value="mRNA"/>
</dbReference>
<dbReference type="SMR" id="Q63264"/>
<dbReference type="FunCoup" id="Q63264">
    <property type="interactions" value="76"/>
</dbReference>
<dbReference type="STRING" id="10116.ENSRNOP00000006308"/>
<dbReference type="PhosphoSitePlus" id="Q63264"/>
<dbReference type="PaxDb" id="10116-ENSRNOP00000006308"/>
<dbReference type="UCSC" id="RGD:2891">
    <property type="organism name" value="rat"/>
</dbReference>
<dbReference type="AGR" id="RGD:2891"/>
<dbReference type="RGD" id="2891">
    <property type="gene designation" value="Il1b"/>
</dbReference>
<dbReference type="eggNOG" id="ENOG502S3E9">
    <property type="taxonomic scope" value="Eukaryota"/>
</dbReference>
<dbReference type="InParanoid" id="Q63264"/>
<dbReference type="PhylomeDB" id="Q63264"/>
<dbReference type="Reactome" id="R-RNO-448706">
    <property type="pathway name" value="Interleukin-1 processing"/>
</dbReference>
<dbReference type="Reactome" id="R-RNO-5620971">
    <property type="pathway name" value="Pyroptosis"/>
</dbReference>
<dbReference type="Reactome" id="R-RNO-5660668">
    <property type="pathway name" value="CLEC7A/inflammasome pathway"/>
</dbReference>
<dbReference type="Reactome" id="R-RNO-9020702">
    <property type="pathway name" value="Interleukin-1 signaling"/>
</dbReference>
<dbReference type="PRO" id="PR:Q63264"/>
<dbReference type="Proteomes" id="UP000002494">
    <property type="component" value="Unplaced"/>
</dbReference>
<dbReference type="GO" id="GO:0005829">
    <property type="term" value="C:cytosol"/>
    <property type="evidence" value="ECO:0007669"/>
    <property type="project" value="UniProtKB-SubCell"/>
</dbReference>
<dbReference type="GO" id="GO:0005576">
    <property type="term" value="C:extracellular region"/>
    <property type="evidence" value="ECO:0000266"/>
    <property type="project" value="RGD"/>
</dbReference>
<dbReference type="GO" id="GO:0005615">
    <property type="term" value="C:extracellular space"/>
    <property type="evidence" value="ECO:0000314"/>
    <property type="project" value="RGD"/>
</dbReference>
<dbReference type="GO" id="GO:0005764">
    <property type="term" value="C:lysosome"/>
    <property type="evidence" value="ECO:0007669"/>
    <property type="project" value="UniProtKB-SubCell"/>
</dbReference>
<dbReference type="GO" id="GO:0030141">
    <property type="term" value="C:secretory granule"/>
    <property type="evidence" value="ECO:0000266"/>
    <property type="project" value="RGD"/>
</dbReference>
<dbReference type="GO" id="GO:0031982">
    <property type="term" value="C:vesicle"/>
    <property type="evidence" value="ECO:0000266"/>
    <property type="project" value="RGD"/>
</dbReference>
<dbReference type="GO" id="GO:0005125">
    <property type="term" value="F:cytokine activity"/>
    <property type="evidence" value="ECO:0000314"/>
    <property type="project" value="RGD"/>
</dbReference>
<dbReference type="GO" id="GO:0005178">
    <property type="term" value="F:integrin binding"/>
    <property type="evidence" value="ECO:0000250"/>
    <property type="project" value="UniProtKB"/>
</dbReference>
<dbReference type="GO" id="GO:0005149">
    <property type="term" value="F:interleukin-1 receptor binding"/>
    <property type="evidence" value="ECO:0007669"/>
    <property type="project" value="InterPro"/>
</dbReference>
<dbReference type="GO" id="GO:0019904">
    <property type="term" value="F:protein domain specific binding"/>
    <property type="evidence" value="ECO:0000266"/>
    <property type="project" value="RGD"/>
</dbReference>
<dbReference type="GO" id="GO:0048018">
    <property type="term" value="F:receptor ligand activity"/>
    <property type="evidence" value="ECO:0000266"/>
    <property type="project" value="RGD"/>
</dbReference>
<dbReference type="GO" id="GO:0048143">
    <property type="term" value="P:astrocyte activation"/>
    <property type="evidence" value="ECO:0000266"/>
    <property type="project" value="RGD"/>
</dbReference>
<dbReference type="GO" id="GO:0071236">
    <property type="term" value="P:cellular response to antibiotic"/>
    <property type="evidence" value="ECO:0000270"/>
    <property type="project" value="RGD"/>
</dbReference>
<dbReference type="GO" id="GO:0071398">
    <property type="term" value="P:cellular response to fatty acid"/>
    <property type="evidence" value="ECO:0000270"/>
    <property type="project" value="RGD"/>
</dbReference>
<dbReference type="GO" id="GO:0071333">
    <property type="term" value="P:cellular response to glucose stimulus"/>
    <property type="evidence" value="ECO:0000270"/>
    <property type="project" value="RGD"/>
</dbReference>
<dbReference type="GO" id="GO:0097398">
    <property type="term" value="P:cellular response to interleukin-17"/>
    <property type="evidence" value="ECO:0000266"/>
    <property type="project" value="RGD"/>
</dbReference>
<dbReference type="GO" id="GO:0071396">
    <property type="term" value="P:cellular response to lipid"/>
    <property type="evidence" value="ECO:0000270"/>
    <property type="project" value="RGD"/>
</dbReference>
<dbReference type="GO" id="GO:0071222">
    <property type="term" value="P:cellular response to lipopolysaccharide"/>
    <property type="evidence" value="ECO:0000270"/>
    <property type="project" value="RGD"/>
</dbReference>
<dbReference type="GO" id="GO:0071260">
    <property type="term" value="P:cellular response to mechanical stimulus"/>
    <property type="evidence" value="ECO:0000266"/>
    <property type="project" value="RGD"/>
</dbReference>
<dbReference type="GO" id="GO:0071466">
    <property type="term" value="P:cellular response to xenobiotic stimulus"/>
    <property type="evidence" value="ECO:0000266"/>
    <property type="project" value="RGD"/>
</dbReference>
<dbReference type="GO" id="GO:0002439">
    <property type="term" value="P:chronic inflammatory response to antigenic stimulus"/>
    <property type="evidence" value="ECO:0000270"/>
    <property type="project" value="RGD"/>
</dbReference>
<dbReference type="GO" id="GO:0019221">
    <property type="term" value="P:cytokine-mediated signaling pathway"/>
    <property type="evidence" value="ECO:0000266"/>
    <property type="project" value="RGD"/>
</dbReference>
<dbReference type="GO" id="GO:0050830">
    <property type="term" value="P:defense response to Gram-positive bacterium"/>
    <property type="evidence" value="ECO:0000266"/>
    <property type="project" value="RGD"/>
</dbReference>
<dbReference type="GO" id="GO:0035234">
    <property type="term" value="P:ectopic germ cell programmed cell death"/>
    <property type="evidence" value="ECO:0000266"/>
    <property type="project" value="RGD"/>
</dbReference>
<dbReference type="GO" id="GO:0097192">
    <property type="term" value="P:extrinsic apoptotic signaling pathway in absence of ligand"/>
    <property type="evidence" value="ECO:0000266"/>
    <property type="project" value="RGD"/>
</dbReference>
<dbReference type="GO" id="GO:0001660">
    <property type="term" value="P:fever generation"/>
    <property type="evidence" value="ECO:0000270"/>
    <property type="project" value="RGD"/>
</dbReference>
<dbReference type="GO" id="GO:0030213">
    <property type="term" value="P:hyaluronan biosynthetic process"/>
    <property type="evidence" value="ECO:0000266"/>
    <property type="project" value="RGD"/>
</dbReference>
<dbReference type="GO" id="GO:0006955">
    <property type="term" value="P:immune response"/>
    <property type="evidence" value="ECO:0000318"/>
    <property type="project" value="GO_Central"/>
</dbReference>
<dbReference type="GO" id="GO:0006954">
    <property type="term" value="P:inflammatory response"/>
    <property type="evidence" value="ECO:0000266"/>
    <property type="project" value="RGD"/>
</dbReference>
<dbReference type="GO" id="GO:0070498">
    <property type="term" value="P:interleukin-1-mediated signaling pathway"/>
    <property type="evidence" value="ECO:0000266"/>
    <property type="project" value="RGD"/>
</dbReference>
<dbReference type="GO" id="GO:0007254">
    <property type="term" value="P:JNK cascade"/>
    <property type="evidence" value="ECO:0000266"/>
    <property type="project" value="RGD"/>
</dbReference>
<dbReference type="GO" id="GO:0007611">
    <property type="term" value="P:learning or memory"/>
    <property type="evidence" value="ECO:0000270"/>
    <property type="project" value="RGD"/>
</dbReference>
<dbReference type="GO" id="GO:0050900">
    <property type="term" value="P:leukocyte migration"/>
    <property type="evidence" value="ECO:0000266"/>
    <property type="project" value="RGD"/>
</dbReference>
<dbReference type="GO" id="GO:0007613">
    <property type="term" value="P:memory"/>
    <property type="evidence" value="ECO:0000315"/>
    <property type="project" value="RGD"/>
</dbReference>
<dbReference type="GO" id="GO:0070487">
    <property type="term" value="P:monocyte aggregation"/>
    <property type="evidence" value="ECO:0000266"/>
    <property type="project" value="RGD"/>
</dbReference>
<dbReference type="GO" id="GO:0070164">
    <property type="term" value="P:negative regulation of adiponectin secretion"/>
    <property type="evidence" value="ECO:0000266"/>
    <property type="project" value="RGD"/>
</dbReference>
<dbReference type="GO" id="GO:2000173">
    <property type="term" value="P:negative regulation of branching morphogenesis of a nerve"/>
    <property type="evidence" value="ECO:0000314"/>
    <property type="project" value="RGD"/>
</dbReference>
<dbReference type="GO" id="GO:0008285">
    <property type="term" value="P:negative regulation of cell population proliferation"/>
    <property type="evidence" value="ECO:0000266"/>
    <property type="project" value="RGD"/>
</dbReference>
<dbReference type="GO" id="GO:0010829">
    <property type="term" value="P:negative regulation of D-glucose transmembrane transport"/>
    <property type="evidence" value="ECO:0000266"/>
    <property type="project" value="RGD"/>
</dbReference>
<dbReference type="GO" id="GO:2001240">
    <property type="term" value="P:negative regulation of extrinsic apoptotic signaling pathway in absence of ligand"/>
    <property type="evidence" value="ECO:0000266"/>
    <property type="project" value="RGD"/>
</dbReference>
<dbReference type="GO" id="GO:1903597">
    <property type="term" value="P:negative regulation of gap junction assembly"/>
    <property type="evidence" value="ECO:0000266"/>
    <property type="project" value="RGD"/>
</dbReference>
<dbReference type="GO" id="GO:0010629">
    <property type="term" value="P:negative regulation of gene expression"/>
    <property type="evidence" value="ECO:0000314"/>
    <property type="project" value="RGD"/>
</dbReference>
<dbReference type="GO" id="GO:0014050">
    <property type="term" value="P:negative regulation of glutamate secretion"/>
    <property type="evidence" value="ECO:0000315"/>
    <property type="project" value="RGD"/>
</dbReference>
<dbReference type="GO" id="GO:0046627">
    <property type="term" value="P:negative regulation of insulin receptor signaling pathway"/>
    <property type="evidence" value="ECO:0000266"/>
    <property type="project" value="RGD"/>
</dbReference>
<dbReference type="GO" id="GO:0050995">
    <property type="term" value="P:negative regulation of lipid catabolic process"/>
    <property type="evidence" value="ECO:0000266"/>
    <property type="project" value="RGD"/>
</dbReference>
<dbReference type="GO" id="GO:0045833">
    <property type="term" value="P:negative regulation of lipid metabolic process"/>
    <property type="evidence" value="ECO:0000266"/>
    <property type="project" value="RGD"/>
</dbReference>
<dbReference type="GO" id="GO:2000178">
    <property type="term" value="P:negative regulation of neural precursor cell proliferation"/>
    <property type="evidence" value="ECO:0000314"/>
    <property type="project" value="RGD"/>
</dbReference>
<dbReference type="GO" id="GO:0050768">
    <property type="term" value="P:negative regulation of neurogenesis"/>
    <property type="evidence" value="ECO:0000314"/>
    <property type="project" value="RGD"/>
</dbReference>
<dbReference type="GO" id="GO:0045665">
    <property type="term" value="P:negative regulation of neuron differentiation"/>
    <property type="evidence" value="ECO:0000314"/>
    <property type="project" value="RGD"/>
</dbReference>
<dbReference type="GO" id="GO:0050805">
    <property type="term" value="P:negative regulation of synaptic transmission"/>
    <property type="evidence" value="ECO:0000266"/>
    <property type="project" value="RGD"/>
</dbReference>
<dbReference type="GO" id="GO:0000122">
    <property type="term" value="P:negative regulation of transcription by RNA polymerase II"/>
    <property type="evidence" value="ECO:0000314"/>
    <property type="project" value="RGD"/>
</dbReference>
<dbReference type="GO" id="GO:0030593">
    <property type="term" value="P:neutrophil chemotaxis"/>
    <property type="evidence" value="ECO:0000266"/>
    <property type="project" value="RGD"/>
</dbReference>
<dbReference type="GO" id="GO:0045766">
    <property type="term" value="P:positive regulation of angiogenesis"/>
    <property type="evidence" value="ECO:0000266"/>
    <property type="project" value="RGD"/>
</dbReference>
<dbReference type="GO" id="GO:0043065">
    <property type="term" value="P:positive regulation of apoptotic process"/>
    <property type="evidence" value="ECO:0000314"/>
    <property type="project" value="RGD"/>
</dbReference>
<dbReference type="GO" id="GO:0048711">
    <property type="term" value="P:positive regulation of astrocyte differentiation"/>
    <property type="evidence" value="ECO:0000314"/>
    <property type="project" value="RGD"/>
</dbReference>
<dbReference type="GO" id="GO:0043123">
    <property type="term" value="P:positive regulation of canonical NF-kappaB signal transduction"/>
    <property type="evidence" value="ECO:0000314"/>
    <property type="project" value="RGD"/>
</dbReference>
<dbReference type="GO" id="GO:0051781">
    <property type="term" value="P:positive regulation of cell division"/>
    <property type="evidence" value="ECO:0007669"/>
    <property type="project" value="UniProtKB-KW"/>
</dbReference>
<dbReference type="GO" id="GO:0030335">
    <property type="term" value="P:positive regulation of cell migration"/>
    <property type="evidence" value="ECO:0000266"/>
    <property type="project" value="RGD"/>
</dbReference>
<dbReference type="GO" id="GO:0008284">
    <property type="term" value="P:positive regulation of cell population proliferation"/>
    <property type="evidence" value="ECO:0000266"/>
    <property type="project" value="RGD"/>
</dbReference>
<dbReference type="GO" id="GO:0032722">
    <property type="term" value="P:positive regulation of chemokine production"/>
    <property type="evidence" value="ECO:0000266"/>
    <property type="project" value="RGD"/>
</dbReference>
<dbReference type="GO" id="GO:0045917">
    <property type="term" value="P:positive regulation of complement activation"/>
    <property type="evidence" value="ECO:0000266"/>
    <property type="project" value="RGD"/>
</dbReference>
<dbReference type="GO" id="GO:0007204">
    <property type="term" value="P:positive regulation of cytosolic calcium ion concentration"/>
    <property type="evidence" value="ECO:0000314"/>
    <property type="project" value="RGD"/>
</dbReference>
<dbReference type="GO" id="GO:0045893">
    <property type="term" value="P:positive regulation of DNA-templated transcription"/>
    <property type="evidence" value="ECO:0000266"/>
    <property type="project" value="RGD"/>
</dbReference>
<dbReference type="GO" id="GO:0010718">
    <property type="term" value="P:positive regulation of epithelial to mesenchymal transition"/>
    <property type="evidence" value="ECO:0000266"/>
    <property type="project" value="RGD"/>
</dbReference>
<dbReference type="GO" id="GO:0070374">
    <property type="term" value="P:positive regulation of ERK1 and ERK2 cascade"/>
    <property type="evidence" value="ECO:0000314"/>
    <property type="project" value="RGD"/>
</dbReference>
<dbReference type="GO" id="GO:0031622">
    <property type="term" value="P:positive regulation of fever generation"/>
    <property type="evidence" value="ECO:0000266"/>
    <property type="project" value="RGD"/>
</dbReference>
<dbReference type="GO" id="GO:0010628">
    <property type="term" value="P:positive regulation of gene expression"/>
    <property type="evidence" value="ECO:0000314"/>
    <property type="project" value="RGD"/>
</dbReference>
<dbReference type="GO" id="GO:0045687">
    <property type="term" value="P:positive regulation of glial cell differentiation"/>
    <property type="evidence" value="ECO:0000314"/>
    <property type="project" value="RGD"/>
</dbReference>
<dbReference type="GO" id="GO:0060252">
    <property type="term" value="P:positive regulation of glial cell proliferation"/>
    <property type="evidence" value="ECO:0000266"/>
    <property type="project" value="RGD"/>
</dbReference>
<dbReference type="GO" id="GO:0032725">
    <property type="term" value="P:positive regulation of granulocyte macrophage colony-stimulating factor production"/>
    <property type="evidence" value="ECO:0000266"/>
    <property type="project" value="RGD"/>
</dbReference>
<dbReference type="GO" id="GO:0034116">
    <property type="term" value="P:positive regulation of heterotypic cell-cell adhesion"/>
    <property type="evidence" value="ECO:0000266"/>
    <property type="project" value="RGD"/>
</dbReference>
<dbReference type="GO" id="GO:0033092">
    <property type="term" value="P:positive regulation of immature T cell proliferation in thymus"/>
    <property type="evidence" value="ECO:0000314"/>
    <property type="project" value="RGD"/>
</dbReference>
<dbReference type="GO" id="GO:0050729">
    <property type="term" value="P:positive regulation of inflammatory response"/>
    <property type="evidence" value="ECO:0000266"/>
    <property type="project" value="RGD"/>
</dbReference>
<dbReference type="GO" id="GO:0032743">
    <property type="term" value="P:positive regulation of interleukin-2 production"/>
    <property type="evidence" value="ECO:0000266"/>
    <property type="project" value="RGD"/>
</dbReference>
<dbReference type="GO" id="GO:0032755">
    <property type="term" value="P:positive regulation of interleukin-6 production"/>
    <property type="evidence" value="ECO:0000314"/>
    <property type="project" value="RGD"/>
</dbReference>
<dbReference type="GO" id="GO:0032757">
    <property type="term" value="P:positive regulation of interleukin-8 production"/>
    <property type="evidence" value="ECO:0000266"/>
    <property type="project" value="RGD"/>
</dbReference>
<dbReference type="GO" id="GO:0046330">
    <property type="term" value="P:positive regulation of JNK cascade"/>
    <property type="evidence" value="ECO:0000314"/>
    <property type="project" value="RGD"/>
</dbReference>
<dbReference type="GO" id="GO:0050996">
    <property type="term" value="P:positive regulation of lipid catabolic process"/>
    <property type="evidence" value="ECO:0000266"/>
    <property type="project" value="RGD"/>
</dbReference>
<dbReference type="GO" id="GO:0010744">
    <property type="term" value="P:positive regulation of macrophage derived foam cell differentiation"/>
    <property type="evidence" value="ECO:0000266"/>
    <property type="project" value="RGD"/>
</dbReference>
<dbReference type="GO" id="GO:0043410">
    <property type="term" value="P:positive regulation of MAPK cascade"/>
    <property type="evidence" value="ECO:0000266"/>
    <property type="project" value="RGD"/>
</dbReference>
<dbReference type="GO" id="GO:0051044">
    <property type="term" value="P:positive regulation of membrane protein ectodomain proteolysis"/>
    <property type="evidence" value="ECO:0000266"/>
    <property type="project" value="RGD"/>
</dbReference>
<dbReference type="GO" id="GO:0045840">
    <property type="term" value="P:positive regulation of mitotic nuclear division"/>
    <property type="evidence" value="ECO:0000266"/>
    <property type="project" value="RGD"/>
</dbReference>
<dbReference type="GO" id="GO:0071639">
    <property type="term" value="P:positive regulation of monocyte chemotactic protein-1 production"/>
    <property type="evidence" value="ECO:0000266"/>
    <property type="project" value="RGD"/>
</dbReference>
<dbReference type="GO" id="GO:0043525">
    <property type="term" value="P:positive regulation of neuron apoptotic process"/>
    <property type="evidence" value="ECO:0000315"/>
    <property type="project" value="RGD"/>
</dbReference>
<dbReference type="GO" id="GO:0090023">
    <property type="term" value="P:positive regulation of neutrophil chemotaxis"/>
    <property type="evidence" value="ECO:0000315"/>
    <property type="project" value="RGD"/>
</dbReference>
<dbReference type="GO" id="GO:0045429">
    <property type="term" value="P:positive regulation of nitric oxide biosynthetic process"/>
    <property type="evidence" value="ECO:0000266"/>
    <property type="project" value="RGD"/>
</dbReference>
<dbReference type="GO" id="GO:1901224">
    <property type="term" value="P:positive regulation of non-canonical NF-kappaB signal transduction"/>
    <property type="evidence" value="ECO:0000266"/>
    <property type="project" value="RGD"/>
</dbReference>
<dbReference type="GO" id="GO:1900745">
    <property type="term" value="P:positive regulation of p38MAPK cascade"/>
    <property type="evidence" value="ECO:0000266"/>
    <property type="project" value="RGD"/>
</dbReference>
<dbReference type="GO" id="GO:0051897">
    <property type="term" value="P:positive regulation of phosphatidylinositol 3-kinase/protein kinase B signal transduction"/>
    <property type="evidence" value="ECO:0000266"/>
    <property type="project" value="RGD"/>
</dbReference>
<dbReference type="GO" id="GO:0010641">
    <property type="term" value="P:positive regulation of platelet-derived growth factor receptor signaling pathway"/>
    <property type="evidence" value="ECO:0000266"/>
    <property type="project" value="RGD"/>
</dbReference>
<dbReference type="GO" id="GO:0031394">
    <property type="term" value="P:positive regulation of prostaglandin biosynthetic process"/>
    <property type="evidence" value="ECO:0000266"/>
    <property type="project" value="RGD"/>
</dbReference>
<dbReference type="GO" id="GO:0032308">
    <property type="term" value="P:positive regulation of prostaglandin secretion"/>
    <property type="evidence" value="ECO:0000266"/>
    <property type="project" value="RGD"/>
</dbReference>
<dbReference type="GO" id="GO:1902680">
    <property type="term" value="P:positive regulation of RNA biosynthetic process"/>
    <property type="evidence" value="ECO:0000266"/>
    <property type="project" value="RGD"/>
</dbReference>
<dbReference type="GO" id="GO:0032874">
    <property type="term" value="P:positive regulation of stress-activated MAPK cascade"/>
    <property type="evidence" value="ECO:0000314"/>
    <property type="project" value="RGD"/>
</dbReference>
<dbReference type="GO" id="GO:0042102">
    <property type="term" value="P:positive regulation of T cell proliferation"/>
    <property type="evidence" value="ECO:0000266"/>
    <property type="project" value="RGD"/>
</dbReference>
<dbReference type="GO" id="GO:2000556">
    <property type="term" value="P:positive regulation of T-helper 1 cell cytokine production"/>
    <property type="evidence" value="ECO:0000250"/>
    <property type="project" value="UniProtKB"/>
</dbReference>
<dbReference type="GO" id="GO:1905075">
    <property type="term" value="P:positive regulation of tight junction disassembly"/>
    <property type="evidence" value="ECO:0000266"/>
    <property type="project" value="RGD"/>
</dbReference>
<dbReference type="GO" id="GO:0045944">
    <property type="term" value="P:positive regulation of transcription by RNA polymerase II"/>
    <property type="evidence" value="ECO:0000314"/>
    <property type="project" value="RGD"/>
</dbReference>
<dbReference type="GO" id="GO:0032729">
    <property type="term" value="P:positive regulation of type II interferon production"/>
    <property type="evidence" value="ECO:0000250"/>
    <property type="project" value="UniProtKB"/>
</dbReference>
<dbReference type="GO" id="GO:0010575">
    <property type="term" value="P:positive regulation of vascular endothelial growth factor production"/>
    <property type="evidence" value="ECO:0000266"/>
    <property type="project" value="RGD"/>
</dbReference>
<dbReference type="GO" id="GO:0043122">
    <property type="term" value="P:regulation of canonical NF-kappaB signal transduction"/>
    <property type="evidence" value="ECO:0000266"/>
    <property type="project" value="RGD"/>
</dbReference>
<dbReference type="GO" id="GO:0050691">
    <property type="term" value="P:regulation of defense response to virus by host"/>
    <property type="evidence" value="ECO:0000266"/>
    <property type="project" value="RGD"/>
</dbReference>
<dbReference type="GO" id="GO:0070372">
    <property type="term" value="P:regulation of ERK1 and ERK2 cascade"/>
    <property type="evidence" value="ECO:0000266"/>
    <property type="project" value="RGD"/>
</dbReference>
<dbReference type="GO" id="GO:1903140">
    <property type="term" value="P:regulation of establishment of endothelial barrier"/>
    <property type="evidence" value="ECO:0000266"/>
    <property type="project" value="RGD"/>
</dbReference>
<dbReference type="GO" id="GO:0050796">
    <property type="term" value="P:regulation of insulin secretion"/>
    <property type="evidence" value="ECO:0000266"/>
    <property type="project" value="RGD"/>
</dbReference>
<dbReference type="GO" id="GO:0050767">
    <property type="term" value="P:regulation of neurogenesis"/>
    <property type="evidence" value="ECO:0000316"/>
    <property type="project" value="ARUK-UCL"/>
</dbReference>
<dbReference type="GO" id="GO:0033198">
    <property type="term" value="P:response to ATP"/>
    <property type="evidence" value="ECO:0000266"/>
    <property type="project" value="RGD"/>
</dbReference>
<dbReference type="GO" id="GO:0009743">
    <property type="term" value="P:response to carbohydrate"/>
    <property type="evidence" value="ECO:0000266"/>
    <property type="project" value="RGD"/>
</dbReference>
<dbReference type="GO" id="GO:0071548">
    <property type="term" value="P:response to dexamethasone"/>
    <property type="evidence" value="ECO:0000270"/>
    <property type="project" value="RGD"/>
</dbReference>
<dbReference type="GO" id="GO:0032355">
    <property type="term" value="P:response to estradiol"/>
    <property type="evidence" value="ECO:0000270"/>
    <property type="project" value="RGD"/>
</dbReference>
<dbReference type="GO" id="GO:0045471">
    <property type="term" value="P:response to ethanol"/>
    <property type="evidence" value="ECO:0000270"/>
    <property type="project" value="RGD"/>
</dbReference>
<dbReference type="GO" id="GO:0010332">
    <property type="term" value="P:response to gamma radiation"/>
    <property type="evidence" value="ECO:0000270"/>
    <property type="project" value="RGD"/>
</dbReference>
<dbReference type="GO" id="GO:0051384">
    <property type="term" value="P:response to glucocorticoid"/>
    <property type="evidence" value="ECO:0000270"/>
    <property type="project" value="RGD"/>
</dbReference>
<dbReference type="GO" id="GO:0001666">
    <property type="term" value="P:response to hypoxia"/>
    <property type="evidence" value="ECO:0000270"/>
    <property type="project" value="RGD"/>
</dbReference>
<dbReference type="GO" id="GO:0035902">
    <property type="term" value="P:response to immobilization stress"/>
    <property type="evidence" value="ECO:0000270"/>
    <property type="project" value="RGD"/>
</dbReference>
<dbReference type="GO" id="GO:0070555">
    <property type="term" value="P:response to interleukin-1"/>
    <property type="evidence" value="ECO:0000266"/>
    <property type="project" value="RGD"/>
</dbReference>
<dbReference type="GO" id="GO:0035900">
    <property type="term" value="P:response to isolation stress"/>
    <property type="evidence" value="ECO:0000270"/>
    <property type="project" value="RGD"/>
</dbReference>
<dbReference type="GO" id="GO:0033591">
    <property type="term" value="P:response to L-ascorbic acid"/>
    <property type="evidence" value="ECO:0000270"/>
    <property type="project" value="RGD"/>
</dbReference>
<dbReference type="GO" id="GO:0032496">
    <property type="term" value="P:response to lipopolysaccharide"/>
    <property type="evidence" value="ECO:0000270"/>
    <property type="project" value="RGD"/>
</dbReference>
<dbReference type="GO" id="GO:0007584">
    <property type="term" value="P:response to nutrient"/>
    <property type="evidence" value="ECO:0000270"/>
    <property type="project" value="RGD"/>
</dbReference>
<dbReference type="GO" id="GO:0010193">
    <property type="term" value="P:response to ozone"/>
    <property type="evidence" value="ECO:0000270"/>
    <property type="project" value="RGD"/>
</dbReference>
<dbReference type="GO" id="GO:0043434">
    <property type="term" value="P:response to peptide hormone"/>
    <property type="evidence" value="ECO:0000270"/>
    <property type="project" value="RGD"/>
</dbReference>
<dbReference type="GO" id="GO:1904627">
    <property type="term" value="P:response to phorbol 13-acetate 12-myristate"/>
    <property type="evidence" value="ECO:0000270"/>
    <property type="project" value="RGD"/>
</dbReference>
<dbReference type="GO" id="GO:0035634">
    <property type="term" value="P:response to stilbenoid"/>
    <property type="evidence" value="ECO:0000270"/>
    <property type="project" value="RGD"/>
</dbReference>
<dbReference type="GO" id="GO:0033280">
    <property type="term" value="P:response to vitamin D"/>
    <property type="evidence" value="ECO:0000270"/>
    <property type="project" value="RGD"/>
</dbReference>
<dbReference type="GO" id="GO:0009410">
    <property type="term" value="P:response to xenobiotic stimulus"/>
    <property type="evidence" value="ECO:0000270"/>
    <property type="project" value="RGD"/>
</dbReference>
<dbReference type="GO" id="GO:0035176">
    <property type="term" value="P:social behavior"/>
    <property type="evidence" value="ECO:0000315"/>
    <property type="project" value="RGD"/>
</dbReference>
<dbReference type="GO" id="GO:0010573">
    <property type="term" value="P:vascular endothelial growth factor production"/>
    <property type="evidence" value="ECO:0000250"/>
    <property type="project" value="UniProtKB"/>
</dbReference>
<dbReference type="CDD" id="cd23296">
    <property type="entry name" value="beta-trefoil_IL1B"/>
    <property type="match status" value="1"/>
</dbReference>
<dbReference type="FunFam" id="2.80.10.50:FF:000027">
    <property type="entry name" value="Interleukin-1 beta"/>
    <property type="match status" value="1"/>
</dbReference>
<dbReference type="Gene3D" id="2.80.10.50">
    <property type="match status" value="1"/>
</dbReference>
<dbReference type="InterPro" id="IPR020877">
    <property type="entry name" value="IL-1_CS"/>
</dbReference>
<dbReference type="InterPro" id="IPR000975">
    <property type="entry name" value="IL-1_fam"/>
</dbReference>
<dbReference type="InterPro" id="IPR003502">
    <property type="entry name" value="IL-1_propep"/>
</dbReference>
<dbReference type="InterPro" id="IPR008996">
    <property type="entry name" value="IL1/FGF"/>
</dbReference>
<dbReference type="PANTHER" id="PTHR10078:SF30">
    <property type="entry name" value="INTERLEUKIN-1 BETA"/>
    <property type="match status" value="1"/>
</dbReference>
<dbReference type="PANTHER" id="PTHR10078">
    <property type="entry name" value="INTERLEUKIN-1 FAMILY MEMBER"/>
    <property type="match status" value="1"/>
</dbReference>
<dbReference type="Pfam" id="PF00340">
    <property type="entry name" value="IL1"/>
    <property type="match status" value="1"/>
</dbReference>
<dbReference type="Pfam" id="PF02394">
    <property type="entry name" value="IL1_propep"/>
    <property type="match status" value="1"/>
</dbReference>
<dbReference type="PRINTS" id="PR00264">
    <property type="entry name" value="INTERLEUKIN1"/>
</dbReference>
<dbReference type="PRINTS" id="PR01359">
    <property type="entry name" value="INTRLEUKIN1B"/>
</dbReference>
<dbReference type="PRINTS" id="PR01357">
    <property type="entry name" value="INTRLEUKN1AB"/>
</dbReference>
<dbReference type="SMART" id="SM00125">
    <property type="entry name" value="IL1"/>
    <property type="match status" value="1"/>
</dbReference>
<dbReference type="SUPFAM" id="SSF50353">
    <property type="entry name" value="Cytokine"/>
    <property type="match status" value="1"/>
</dbReference>
<dbReference type="PROSITE" id="PS00253">
    <property type="entry name" value="INTERLEUKIN_1"/>
    <property type="match status" value="1"/>
</dbReference>
<name>IL1B_RAT</name>
<gene>
    <name evidence="6" type="primary">Il1b</name>
</gene>
<organism>
    <name type="scientific">Rattus norvegicus</name>
    <name type="common">Rat</name>
    <dbReference type="NCBI Taxonomy" id="10116"/>
    <lineage>
        <taxon>Eukaryota</taxon>
        <taxon>Metazoa</taxon>
        <taxon>Chordata</taxon>
        <taxon>Craniata</taxon>
        <taxon>Vertebrata</taxon>
        <taxon>Euteleostomi</taxon>
        <taxon>Mammalia</taxon>
        <taxon>Eutheria</taxon>
        <taxon>Euarchontoglires</taxon>
        <taxon>Glires</taxon>
        <taxon>Rodentia</taxon>
        <taxon>Myomorpha</taxon>
        <taxon>Muroidea</taxon>
        <taxon>Muridae</taxon>
        <taxon>Murinae</taxon>
        <taxon>Rattus</taxon>
    </lineage>
</organism>
<accession>Q63264</accession>
<proteinExistence type="evidence at transcript level"/>
<evidence type="ECO:0000250" key="1"/>
<evidence type="ECO:0000250" key="2">
    <source>
        <dbReference type="UniProtKB" id="P01584"/>
    </source>
</evidence>
<evidence type="ECO:0000250" key="3">
    <source>
        <dbReference type="UniProtKB" id="P10749"/>
    </source>
</evidence>
<evidence type="ECO:0000269" key="4">
    <source>
    </source>
</evidence>
<evidence type="ECO:0000305" key="5"/>
<evidence type="ECO:0000312" key="6">
    <source>
        <dbReference type="RGD" id="2891"/>
    </source>
</evidence>